<proteinExistence type="evidence at transcript level"/>
<evidence type="ECO:0000250" key="1"/>
<evidence type="ECO:0000250" key="2">
    <source>
        <dbReference type="UniProtKB" id="Q7M750"/>
    </source>
</evidence>
<evidence type="ECO:0000255" key="3"/>
<feature type="chain" id="PRO_0000072590" description="Opalin">
    <location>
        <begin position="1"/>
        <end position="142"/>
    </location>
</feature>
<feature type="topological domain" description="Extracellular" evidence="3">
    <location>
        <begin position="1"/>
        <end position="33"/>
    </location>
</feature>
<feature type="transmembrane region" description="Helical" evidence="3">
    <location>
        <begin position="34"/>
        <end position="54"/>
    </location>
</feature>
<feature type="topological domain" description="Cytoplasmic" evidence="3">
    <location>
        <begin position="55"/>
        <end position="142"/>
    </location>
</feature>
<feature type="region of interest" description="Required for plasma membrane localization" evidence="2">
    <location>
        <begin position="78"/>
        <end position="94"/>
    </location>
</feature>
<feature type="glycosylation site" description="N-linked (GlcNAc...) asparagine" evidence="3">
    <location>
        <position position="6"/>
    </location>
</feature>
<feature type="glycosylation site" description="N-linked (GlcNAc...) asparagine" evidence="3">
    <location>
        <position position="12"/>
    </location>
</feature>
<feature type="glycosylation site" description="O-linked (GalNAc...) threonine" evidence="1">
    <location>
        <position position="14"/>
    </location>
</feature>
<protein>
    <recommendedName>
        <fullName>Opalin</fullName>
    </recommendedName>
    <alternativeName>
        <fullName>Oligodendrocytic myelin paranodal and inner loop protein</fullName>
    </alternativeName>
    <alternativeName>
        <fullName>Transmembrane protein 10</fullName>
    </alternativeName>
</protein>
<gene>
    <name type="primary">OPALIN</name>
    <name type="synonym">TMEM10</name>
</gene>
<accession>Q5E9I3</accession>
<comment type="function">
    <text evidence="2">Central nervous system-specific myelin protein that increase myelin genes expression during oligodendrocyte differentiation. Promotes oligodendrocyte terminal differentiation.</text>
</comment>
<comment type="subcellular location">
    <subcellularLocation>
        <location evidence="2">Cell membrane</location>
        <topology evidence="3">Single-pass type I membrane protein</topology>
    </subcellularLocation>
    <text evidence="2">In the CNS, enriched in the myelin paranodal and inner loop membranes, but not that of the PNS. Enriched in the leading edge of extending processes.</text>
</comment>
<reference key="1">
    <citation type="journal article" date="2005" name="BMC Genomics">
        <title>Characterization of 954 bovine full-CDS cDNA sequences.</title>
        <authorList>
            <person name="Harhay G.P."/>
            <person name="Sonstegard T.S."/>
            <person name="Keele J.W."/>
            <person name="Heaton M.P."/>
            <person name="Clawson M.L."/>
            <person name="Snelling W.M."/>
            <person name="Wiedmann R.T."/>
            <person name="Van Tassell C.P."/>
            <person name="Smith T.P.L."/>
        </authorList>
    </citation>
    <scope>NUCLEOTIDE SEQUENCE [LARGE SCALE MRNA]</scope>
</reference>
<organism>
    <name type="scientific">Bos taurus</name>
    <name type="common">Bovine</name>
    <dbReference type="NCBI Taxonomy" id="9913"/>
    <lineage>
        <taxon>Eukaryota</taxon>
        <taxon>Metazoa</taxon>
        <taxon>Chordata</taxon>
        <taxon>Craniata</taxon>
        <taxon>Vertebrata</taxon>
        <taxon>Euteleostomi</taxon>
        <taxon>Mammalia</taxon>
        <taxon>Eutheria</taxon>
        <taxon>Laurasiatheria</taxon>
        <taxon>Artiodactyla</taxon>
        <taxon>Ruminantia</taxon>
        <taxon>Pecora</taxon>
        <taxon>Bovidae</taxon>
        <taxon>Bovinae</taxon>
        <taxon>Bos</taxon>
    </lineage>
</organism>
<name>OPALI_BOVIN</name>
<keyword id="KW-1003">Cell membrane</keyword>
<keyword id="KW-0325">Glycoprotein</keyword>
<keyword id="KW-0472">Membrane</keyword>
<keyword id="KW-1185">Reference proteome</keyword>
<keyword id="KW-0812">Transmembrane</keyword>
<keyword id="KW-1133">Transmembrane helix</keyword>
<dbReference type="EMBL" id="BT020937">
    <property type="protein sequence ID" value="AAX08954.1"/>
    <property type="molecule type" value="mRNA"/>
</dbReference>
<dbReference type="FunCoup" id="Q5E9I3">
    <property type="interactions" value="46"/>
</dbReference>
<dbReference type="STRING" id="9913.ENSBTAP00000015591"/>
<dbReference type="GlyCosmos" id="Q5E9I3">
    <property type="glycosylation" value="3 sites, No reported glycans"/>
</dbReference>
<dbReference type="GlyGen" id="Q5E9I3">
    <property type="glycosylation" value="3 sites"/>
</dbReference>
<dbReference type="InParanoid" id="Q5E9I3"/>
<dbReference type="OrthoDB" id="9831411at2759"/>
<dbReference type="Proteomes" id="UP000009136">
    <property type="component" value="Unplaced"/>
</dbReference>
<dbReference type="GO" id="GO:0044291">
    <property type="term" value="C:cell-cell contact zone"/>
    <property type="evidence" value="ECO:0000318"/>
    <property type="project" value="GO_Central"/>
</dbReference>
<dbReference type="GO" id="GO:0005886">
    <property type="term" value="C:plasma membrane"/>
    <property type="evidence" value="ECO:0000250"/>
    <property type="project" value="UniProtKB"/>
</dbReference>
<dbReference type="GO" id="GO:0048713">
    <property type="term" value="P:regulation of oligodendrocyte differentiation"/>
    <property type="evidence" value="ECO:0000250"/>
    <property type="project" value="UniProtKB"/>
</dbReference>
<dbReference type="InterPro" id="IPR026609">
    <property type="entry name" value="Opalin"/>
</dbReference>
<dbReference type="PANTHER" id="PTHR21102">
    <property type="entry name" value="OPALIN"/>
    <property type="match status" value="1"/>
</dbReference>
<dbReference type="PANTHER" id="PTHR21102:SF0">
    <property type="entry name" value="OPALIN"/>
    <property type="match status" value="1"/>
</dbReference>
<sequence>MSFSLNFTLPANTTSSPVVTSGKGADCGPSLGLAAGIPSLVATALLVALLLILIHRRRRSSESTEEIERPCEISEIYDNPRVAENPRRSPTHEKNIMGAEEAHIYVKTVSGSQEPMRDTYRPAVEMERRRGLWWLIPRLSLE</sequence>